<evidence type="ECO:0000250" key="1">
    <source>
        <dbReference type="UniProtKB" id="P06700"/>
    </source>
</evidence>
<evidence type="ECO:0000250" key="2">
    <source>
        <dbReference type="UniProtKB" id="P53686"/>
    </source>
</evidence>
<evidence type="ECO:0000255" key="3">
    <source>
        <dbReference type="PROSITE-ProRule" id="PRU00236"/>
    </source>
</evidence>
<evidence type="ECO:0000256" key="4">
    <source>
        <dbReference type="SAM" id="MobiDB-lite"/>
    </source>
</evidence>
<evidence type="ECO:0000269" key="5">
    <source>
    </source>
</evidence>
<evidence type="ECO:0000269" key="6">
    <source>
    </source>
</evidence>
<evidence type="ECO:0000269" key="7">
    <source>
    </source>
</evidence>
<evidence type="ECO:0000269" key="8">
    <source>
    </source>
</evidence>
<evidence type="ECO:0000269" key="9">
    <source>
    </source>
</evidence>
<evidence type="ECO:0000269" key="10">
    <source>
    </source>
</evidence>
<evidence type="ECO:0000269" key="11">
    <source>
    </source>
</evidence>
<evidence type="ECO:0000269" key="12">
    <source>
    </source>
</evidence>
<evidence type="ECO:0000269" key="13">
    <source>
    </source>
</evidence>
<evidence type="ECO:0000269" key="14">
    <source>
    </source>
</evidence>
<evidence type="ECO:0000269" key="15">
    <source>
    </source>
</evidence>
<evidence type="ECO:0000269" key="16">
    <source>
    </source>
</evidence>
<evidence type="ECO:0000305" key="17"/>
<evidence type="ECO:0000312" key="18">
    <source>
        <dbReference type="WormBase" id="R11A8.4a"/>
    </source>
</evidence>
<gene>
    <name evidence="18" type="primary">sir-2.1</name>
    <name evidence="18" type="ORF">R11A8.4</name>
</gene>
<comment type="function">
    <text evidence="1 5 6 7 8 9 10 12 13 14 15 16">NAD-dependent deacetylase (By similarity). Involved in metabolism, apoptosis, response to oxidative stress, response to DNA damage, and determination of lifespan (PubMed:16256736, PubMed:16280150, PubMed:16777605, PubMed:21909281, PubMed:23509272, PubMed:24077178, PubMed:26598553, PubMed:27514077, PubMed:27650246). Required for a reduction of the 'Lys-16' acetylation of histone H4 (H4K16ac) on dosage-compensated X chromosomes in hermaphrodites (PubMed:22393255). Plays a role in germ cell and somatic cell apoptosis in response to DNA damage (PubMed:26598553, PubMed:27650246). Functions upstream of daf-16/Forkhead box protein O in the Insulin/IGF-1-like signaling (IIS) mediated pathway, promoting daf-16 mediated transcriptional activation and increased lifespan (PubMed:16280150, PubMed:16777605). May also regulate lifespan independently of daf-16 by modulating the transcription of genes involved in the stress response of the endoplasmic reticulum (ER) (PubMed:16256736, PubMed:16280150). Functions upstream of transcriptional coregulator hcf-1, perhaps acting independently of the IIS mediated pathway, to modulate lifespan and oxidative stress response (PubMed:21909281). Acts upstream of the nicotinic acid metabolism pathway, which may be linked to the regulation of longevity (PubMed:24077178). Plays a role in ascaroside-mediated longevity and stress resistance (PubMed:23509272).</text>
</comment>
<comment type="catalytic activity">
    <reaction evidence="3">
        <text>N(6)-acetyl-L-lysyl-[protein] + NAD(+) + H2O = 2''-O-acetyl-ADP-D-ribose + nicotinamide + L-lysyl-[protein]</text>
        <dbReference type="Rhea" id="RHEA:43636"/>
        <dbReference type="Rhea" id="RHEA-COMP:9752"/>
        <dbReference type="Rhea" id="RHEA-COMP:10731"/>
        <dbReference type="ChEBI" id="CHEBI:15377"/>
        <dbReference type="ChEBI" id="CHEBI:17154"/>
        <dbReference type="ChEBI" id="CHEBI:29969"/>
        <dbReference type="ChEBI" id="CHEBI:57540"/>
        <dbReference type="ChEBI" id="CHEBI:61930"/>
        <dbReference type="ChEBI" id="CHEBI:83767"/>
        <dbReference type="EC" id="2.3.1.286"/>
    </reaction>
</comment>
<comment type="cofactor">
    <cofactor evidence="1">
        <name>Zn(2+)</name>
        <dbReference type="ChEBI" id="CHEBI:29105"/>
    </cofactor>
    <text evidence="1">Binds 1 zinc ion per subunit.</text>
</comment>
<comment type="subunit">
    <text evidence="9 10">Interacts with ftt-2 and par-5 (PubMed:16777605). Interacts with daf-16 following heat-shock, which causes daf-16 to accumulate in the nucleus (PubMed:16777605). Interaction with daf-16 is promoted by ftt-2 (PubMed:16777605). Interacts with transcriptional coregulator hcf-1 (PubMed:21909281).</text>
</comment>
<comment type="interaction">
    <interactant intactId="EBI-966082">
        <id>Q21921</id>
    </interactant>
    <interactant intactId="EBI-324028">
        <id>O16850</id>
        <label>daf-16</label>
    </interactant>
    <organismsDiffer>false</organismsDiffer>
    <experiments>2</experiments>
</comment>
<comment type="interaction">
    <interactant intactId="EBI-966082">
        <id>Q21921</id>
    </interactant>
    <interactant intactId="EBI-966073">
        <id>Q20655</id>
        <label>ftt-2</label>
    </interactant>
    <organismsDiffer>false</organismsDiffer>
    <experiments>3</experiments>
</comment>
<comment type="interaction">
    <interactant intactId="EBI-966082">
        <id>Q21921</id>
    </interactant>
    <interactant intactId="EBI-318108">
        <id>P41932</id>
        <label>par-5</label>
    </interactant>
    <organismsDiffer>false</organismsDiffer>
    <experiments>3</experiments>
</comment>
<comment type="subcellular location">
    <subcellularLocation>
        <location evidence="8 9 14 16">Nucleus</location>
    </subcellularLocation>
    <subcellularLocation>
        <location evidence="14 16">Cytoplasm</location>
    </subcellularLocation>
    <text evidence="14 16">Translocates from the nucleus to the cytoplasm during apoptosis.</text>
</comment>
<comment type="developmental stage">
    <text evidence="8">Expressed in neurons of the head and tail from embryo to adult. Expressed in the hypodermis from the three-fold stage of embryogenesis; expression in the hypodermis subsequently decreases at L3 and is undetectable in adults.</text>
</comment>
<comment type="disruption phenotype">
    <text evidence="11 12 13 14">Reduces the longevity-extending effects of nicotinic acid when exposed to 1 mM nicotinic acid (PubMed:24077178). Defective ascaroside-mediated responses with neither ascr#2 nor ascr#3 inducing lifespan extension or conferring thermotolerance (PubMed:23509272). Reduced germ cell apoptosis in the gonadal arms following DNA damage induced by UV-irradiation (PubMed:26598553). RNAi-mediated depletion results in an increase of 'Lys-16' acetylation of histone H4 (H4K16ac) on dosage-compensated X chromosomes in hermaphrodites (PubMed:22393255).</text>
</comment>
<comment type="similarity">
    <text evidence="17">Belongs to the sirtuin family. Class I subfamily.</text>
</comment>
<keyword id="KW-0963">Cytoplasm</keyword>
<keyword id="KW-0479">Metal-binding</keyword>
<keyword id="KW-0520">NAD</keyword>
<keyword id="KW-0539">Nucleus</keyword>
<keyword id="KW-1185">Reference proteome</keyword>
<keyword id="KW-0808">Transferase</keyword>
<keyword id="KW-0862">Zinc</keyword>
<name>SIR2_CAEEL</name>
<organism>
    <name type="scientific">Caenorhabditis elegans</name>
    <dbReference type="NCBI Taxonomy" id="6239"/>
    <lineage>
        <taxon>Eukaryota</taxon>
        <taxon>Metazoa</taxon>
        <taxon>Ecdysozoa</taxon>
        <taxon>Nematoda</taxon>
        <taxon>Chromadorea</taxon>
        <taxon>Rhabditida</taxon>
        <taxon>Rhabditina</taxon>
        <taxon>Rhabditomorpha</taxon>
        <taxon>Rhabditoidea</taxon>
        <taxon>Rhabditidae</taxon>
        <taxon>Peloderinae</taxon>
        <taxon>Caenorhabditis</taxon>
    </lineage>
</organism>
<protein>
    <recommendedName>
        <fullName>NAD-dependent protein deacetylase sir-2.1</fullName>
        <ecNumber evidence="3">2.3.1.286</ecNumber>
    </recommendedName>
    <alternativeName>
        <fullName>Protein sir-2.1</fullName>
    </alternativeName>
    <alternativeName>
        <fullName>Regulatory protein SIR2 homolog 1</fullName>
    </alternativeName>
</protein>
<proteinExistence type="evidence at protein level"/>
<reference key="1">
    <citation type="journal article" date="1998" name="Science">
        <title>Genome sequence of the nematode C. elegans: a platform for investigating biology.</title>
        <authorList>
            <consortium name="The C. elegans sequencing consortium"/>
        </authorList>
    </citation>
    <scope>NUCLEOTIDE SEQUENCE [LARGE SCALE GENOMIC DNA]</scope>
    <source>
        <strain>Bristol N2</strain>
    </source>
</reference>
<reference key="2">
    <citation type="journal article" date="2001" name="Nature">
        <title>Increased dosage of a sir-2 gene extends lifespan in Caenorhabditis elegans.</title>
        <authorList>
            <person name="Tissenbaum H.A."/>
            <person name="Guarente L."/>
        </authorList>
    </citation>
    <scope>FUNCTION</scope>
</reference>
<reference key="3">
    <citation type="journal article" date="2005" name="Dev. Cell">
        <title>A role for SIR-2.1 regulation of ER stress response genes in determining C. elegans life span.</title>
        <authorList>
            <person name="Viswanathan M."/>
            <person name="Kim S.K."/>
            <person name="Berdichevsky A."/>
            <person name="Guarente L."/>
        </authorList>
    </citation>
    <scope>FUNCTION</scope>
</reference>
<reference key="4">
    <citation type="journal article" date="2005" name="Nat. Genet.">
        <title>Resveratrol rescues mutant polyglutamine cytotoxicity in nematode and mammalian neurons.</title>
        <authorList>
            <person name="Parker J.A."/>
            <person name="Arango M."/>
            <person name="Abderrahmane S."/>
            <person name="Lambert E."/>
            <person name="Tourette C."/>
            <person name="Catoire H."/>
            <person name="Neri C."/>
        </authorList>
    </citation>
    <scope>FUNCTION</scope>
</reference>
<reference key="5">
    <citation type="journal article" date="2006" name="Cell">
        <title>C. elegans SIR-2.1 interacts with 14-3-3 proteins to activate DAF-16 and extend life span.</title>
        <authorList>
            <person name="Berdichevsky A."/>
            <person name="Viswanathan M."/>
            <person name="Horvitz H.R."/>
            <person name="Guarente L."/>
        </authorList>
    </citation>
    <scope>FUNCTION</scope>
    <scope>INTERACTION WITH DAF-16; FTT-2 AND PAR-5</scope>
    <scope>SUBCELLULAR LOCATION</scope>
</reference>
<reference key="6">
    <citation type="journal article" date="2006" name="Mech. Ageing Dev.">
        <title>Overlapping and distinct functions for a Caenorhabditis elegans SIR2 and DAF-16/FOXO.</title>
        <authorList>
            <person name="Wang Y."/>
            <person name="Tissenbaum H.A."/>
        </authorList>
    </citation>
    <scope>FUNCTION</scope>
    <scope>SUBCELLULAR LOCATION</scope>
    <scope>DEVELOPMENTAL STAGE</scope>
</reference>
<reference evidence="17" key="7">
    <citation type="journal article" date="2011" name="PLoS Genet.">
        <title>The evolutionarily conserved longevity determinants HCF-1 and SIR-2.1/SIRT1 collaborate to regulate DAF-16/FOXO.</title>
        <authorList>
            <person name="Rizki G."/>
            <person name="Iwata T.N."/>
            <person name="Li J."/>
            <person name="Riedel C.G."/>
            <person name="Picard C.L."/>
            <person name="Jan M."/>
            <person name="Murphy C.T."/>
            <person name="Lee S.S."/>
        </authorList>
    </citation>
    <scope>FUNCTION</scope>
    <scope>INTERACTION WITH HCF-1</scope>
</reference>
<reference key="8">
    <citation type="journal article" date="2012" name="Mol. Cell. Biol.">
        <title>Caenorhabditis elegans dosage compensation regulates histone H4 chromatin state on X chromosomes.</title>
        <authorList>
            <person name="Wells M.B."/>
            <person name="Snyder M.J."/>
            <person name="Custer L.M."/>
            <person name="Csankovszki G."/>
        </authorList>
    </citation>
    <scope>FUNCTION</scope>
    <scope>DISRUPTION PHENOTYPE</scope>
</reference>
<reference key="9">
    <citation type="journal article" date="2013" name="Nat. Chem. Biol.">
        <title>Role of sirtuins in lifespan regulation is linked to methylation of nicotinamide.</title>
        <authorList>
            <person name="Schmeisser K."/>
            <person name="Mansfeld J."/>
            <person name="Kuhlow D."/>
            <person name="Weimer S."/>
            <person name="Priebe S."/>
            <person name="Heiland I."/>
            <person name="Birringer M."/>
            <person name="Groth M."/>
            <person name="Segref A."/>
            <person name="Kanfi Y."/>
            <person name="Price N.L."/>
            <person name="Schmeisser S."/>
            <person name="Schuster S."/>
            <person name="Pfeiffer A.F."/>
            <person name="Guthke R."/>
            <person name="Platzer M."/>
            <person name="Hoppe T."/>
            <person name="Cohen H.Y."/>
            <person name="Zarse K."/>
            <person name="Sinclair D.A."/>
            <person name="Ristow M."/>
        </authorList>
    </citation>
    <scope>FUNCTION</scope>
    <scope>DISRUPTION PHENOTYPE</scope>
</reference>
<reference key="10">
    <citation type="journal article" date="2013" name="Proc. Natl. Acad. Sci. U.S.A.">
        <title>Pheromone sensing regulates Caenorhabditis elegans lifespan and stress resistance via the deacetylase SIR-2.1.</title>
        <authorList>
            <person name="Ludewig A.H."/>
            <person name="Izrayelit Y."/>
            <person name="Park D."/>
            <person name="Malik R.U."/>
            <person name="Zimmermann A."/>
            <person name="Mahanti P."/>
            <person name="Fox B.W."/>
            <person name="Bethke A."/>
            <person name="Doering F."/>
            <person name="Riddle D.L."/>
            <person name="Schroeder F.C."/>
        </authorList>
    </citation>
    <scope>FUNCTION</scope>
    <scope>DISRUPTION PHENOTYPE</scope>
</reference>
<reference evidence="17" key="11">
    <citation type="journal article" date="2016" name="Aging (Albany NY)">
        <title>Scavengers of reactive gamma-ketoaldehydes extend Caenorhabditis elegans lifespan and healthspan through protein-level interactions with SIR-2.1 and ETS-7.</title>
        <authorList>
            <person name="Nguyen T.T."/>
            <person name="Caito S.W."/>
            <person name="Zackert W.E."/>
            <person name="West J.D."/>
            <person name="Zhu S."/>
            <person name="Aschner M."/>
            <person name="Fessel J.P."/>
            <person name="Roberts L.J. II"/>
        </authorList>
    </citation>
    <scope>FUNCTION</scope>
</reference>
<reference key="12">
    <citation type="journal article" date="2016" name="J. Cell Sci.">
        <title>Loss of PGL-1 and PGL-3, members of a family of constitutive germ-granule components, promotes germline apoptosis in C. elegans.</title>
        <authorList>
            <person name="Min H."/>
            <person name="Shim Y.H."/>
            <person name="Kawasaki I."/>
        </authorList>
    </citation>
    <scope>FUNCTION</scope>
    <scope>SUBCELLULAR LOCATION</scope>
    <scope>DISRUPTION PHENOTYPE</scope>
</reference>
<reference key="13">
    <citation type="journal article" date="2016" name="Sci. Rep.">
        <title>Somatically expressed germ-granule components, PGL-1 and PGL-3, repress programmed cell death in C. elegans.</title>
        <authorList>
            <person name="Al-Amin M."/>
            <person name="Min H."/>
            <person name="Shim Y.H."/>
            <person name="Kawasaki I."/>
        </authorList>
    </citation>
    <scope>FUNCTION</scope>
    <scope>SUBCELLULAR LOCATION</scope>
</reference>
<accession>Q21921</accession>
<dbReference type="EC" id="2.3.1.286" evidence="3"/>
<dbReference type="EMBL" id="Z70310">
    <property type="protein sequence ID" value="CAA94364.1"/>
    <property type="molecule type" value="Genomic_DNA"/>
</dbReference>
<dbReference type="PIR" id="T24172">
    <property type="entry name" value="T24172"/>
</dbReference>
<dbReference type="RefSeq" id="NP_001255484.1">
    <property type="nucleotide sequence ID" value="NM_001268555.5"/>
</dbReference>
<dbReference type="SMR" id="Q21921"/>
<dbReference type="BioGRID" id="43026">
    <property type="interactions" value="5"/>
</dbReference>
<dbReference type="ComplexPortal" id="CPX-3883">
    <property type="entry name" value="daf-16-sir-2.1 complex"/>
</dbReference>
<dbReference type="ComplexPortal" id="CPX-3885">
    <property type="entry name" value="sir-2.1-ftt-2 complex"/>
</dbReference>
<dbReference type="ComplexPortal" id="CPX-3886">
    <property type="entry name" value="sir-2.1-par-5 complex"/>
</dbReference>
<dbReference type="FunCoup" id="Q21921">
    <property type="interactions" value="3294"/>
</dbReference>
<dbReference type="IntAct" id="Q21921">
    <property type="interactions" value="3"/>
</dbReference>
<dbReference type="STRING" id="6239.R11A8.4a.1"/>
<dbReference type="MoonProt" id="Q21921"/>
<dbReference type="iPTMnet" id="Q21921"/>
<dbReference type="PaxDb" id="6239-R11A8.4a"/>
<dbReference type="EnsemblMetazoa" id="R11A8.4a.1">
    <property type="protein sequence ID" value="R11A8.4a.1"/>
    <property type="gene ID" value="WBGene00004800"/>
</dbReference>
<dbReference type="GeneID" id="177924"/>
<dbReference type="KEGG" id="cel:CELE_R11A8.4"/>
<dbReference type="UCSC" id="R11A8.4.1">
    <property type="organism name" value="c. elegans"/>
</dbReference>
<dbReference type="AGR" id="WB:WBGene00004800"/>
<dbReference type="CTD" id="177924"/>
<dbReference type="WormBase" id="R11A8.4a">
    <property type="protein sequence ID" value="CE06302"/>
    <property type="gene ID" value="WBGene00004800"/>
    <property type="gene designation" value="sir-2.1"/>
</dbReference>
<dbReference type="eggNOG" id="KOG2684">
    <property type="taxonomic scope" value="Eukaryota"/>
</dbReference>
<dbReference type="GeneTree" id="ENSGT00940000159406"/>
<dbReference type="InParanoid" id="Q21921"/>
<dbReference type="OMA" id="FSKCTCT"/>
<dbReference type="OrthoDB" id="424302at2759"/>
<dbReference type="PhylomeDB" id="Q21921"/>
<dbReference type="Reactome" id="R-CEL-9617629">
    <property type="pathway name" value="Regulation of FOXO transcriptional activity by acetylation"/>
</dbReference>
<dbReference type="Reactome" id="R-CEL-9856649">
    <property type="pathway name" value="Transcriptional and post-translational regulation of MITF-M expression and activity"/>
</dbReference>
<dbReference type="SignaLink" id="Q21921"/>
<dbReference type="PRO" id="PR:Q21921"/>
<dbReference type="Proteomes" id="UP000001940">
    <property type="component" value="Chromosome IV"/>
</dbReference>
<dbReference type="Bgee" id="WBGene00004800">
    <property type="expression patterns" value="Expressed in embryo and 4 other cell types or tissues"/>
</dbReference>
<dbReference type="ExpressionAtlas" id="Q21921">
    <property type="expression patterns" value="baseline and differential"/>
</dbReference>
<dbReference type="GO" id="GO:0000781">
    <property type="term" value="C:chromosome, telomeric region"/>
    <property type="evidence" value="ECO:0000314"/>
    <property type="project" value="WormBase"/>
</dbReference>
<dbReference type="GO" id="GO:0005737">
    <property type="term" value="C:cytoplasm"/>
    <property type="evidence" value="ECO:0000314"/>
    <property type="project" value="WormBase"/>
</dbReference>
<dbReference type="GO" id="GO:0005637">
    <property type="term" value="C:nuclear inner membrane"/>
    <property type="evidence" value="ECO:0000318"/>
    <property type="project" value="GO_Central"/>
</dbReference>
<dbReference type="GO" id="GO:0005654">
    <property type="term" value="C:nucleoplasm"/>
    <property type="evidence" value="ECO:0000318"/>
    <property type="project" value="GO_Central"/>
</dbReference>
<dbReference type="GO" id="GO:0005634">
    <property type="term" value="C:nucleus"/>
    <property type="evidence" value="ECO:0000314"/>
    <property type="project" value="WormBase"/>
</dbReference>
<dbReference type="GO" id="GO:0048471">
    <property type="term" value="C:perinuclear region of cytoplasm"/>
    <property type="evidence" value="ECO:0000314"/>
    <property type="project" value="WormBase"/>
</dbReference>
<dbReference type="GO" id="GO:0033553">
    <property type="term" value="C:rDNA heterochromatin"/>
    <property type="evidence" value="ECO:0000318"/>
    <property type="project" value="GO_Central"/>
</dbReference>
<dbReference type="GO" id="GO:0019213">
    <property type="term" value="F:deacetylase activity"/>
    <property type="evidence" value="ECO:0000314"/>
    <property type="project" value="WormBase"/>
</dbReference>
<dbReference type="GO" id="GO:0017136">
    <property type="term" value="F:histone deacetylase activity, NAD-dependent"/>
    <property type="evidence" value="ECO:0000318"/>
    <property type="project" value="GO_Central"/>
</dbReference>
<dbReference type="GO" id="GO:0141051">
    <property type="term" value="F:histone H4K deacetylase activity"/>
    <property type="evidence" value="ECO:0000314"/>
    <property type="project" value="WormBase"/>
</dbReference>
<dbReference type="GO" id="GO:0046872">
    <property type="term" value="F:metal ion binding"/>
    <property type="evidence" value="ECO:0007669"/>
    <property type="project" value="UniProtKB-KW"/>
</dbReference>
<dbReference type="GO" id="GO:0070403">
    <property type="term" value="F:NAD+ binding"/>
    <property type="evidence" value="ECO:0000318"/>
    <property type="project" value="GO_Central"/>
</dbReference>
<dbReference type="GO" id="GO:0002039">
    <property type="term" value="F:p53 binding"/>
    <property type="evidence" value="ECO:0000318"/>
    <property type="project" value="GO_Central"/>
</dbReference>
<dbReference type="GO" id="GO:0003714">
    <property type="term" value="F:transcription corepressor activity"/>
    <property type="evidence" value="ECO:0000318"/>
    <property type="project" value="GO_Central"/>
</dbReference>
<dbReference type="GO" id="GO:0034605">
    <property type="term" value="P:cellular response to heat"/>
    <property type="evidence" value="ECO:0000303"/>
    <property type="project" value="ComplexPortal"/>
</dbReference>
<dbReference type="GO" id="GO:0040024">
    <property type="term" value="P:dauer larval development"/>
    <property type="evidence" value="ECO:0000316"/>
    <property type="project" value="WormBase"/>
</dbReference>
<dbReference type="GO" id="GO:0008340">
    <property type="term" value="P:determination of adult lifespan"/>
    <property type="evidence" value="ECO:0000315"/>
    <property type="project" value="WormBase"/>
</dbReference>
<dbReference type="GO" id="GO:0031507">
    <property type="term" value="P:heterochromatin formation"/>
    <property type="evidence" value="ECO:0000318"/>
    <property type="project" value="GO_Central"/>
</dbReference>
<dbReference type="GO" id="GO:0008630">
    <property type="term" value="P:intrinsic apoptotic signaling pathway in response to DNA damage"/>
    <property type="evidence" value="ECO:0000315"/>
    <property type="project" value="WormBase"/>
</dbReference>
<dbReference type="GO" id="GO:0051457">
    <property type="term" value="P:maintenance of protein location in nucleus"/>
    <property type="evidence" value="ECO:0000303"/>
    <property type="project" value="ComplexPortal"/>
</dbReference>
<dbReference type="GO" id="GO:0045892">
    <property type="term" value="P:negative regulation of DNA-templated transcription"/>
    <property type="evidence" value="ECO:0000318"/>
    <property type="project" value="GO_Central"/>
</dbReference>
<dbReference type="GO" id="GO:0010628">
    <property type="term" value="P:positive regulation of gene expression"/>
    <property type="evidence" value="ECO:0000303"/>
    <property type="project" value="ComplexPortal"/>
</dbReference>
<dbReference type="GO" id="GO:0010468">
    <property type="term" value="P:regulation of gene expression"/>
    <property type="evidence" value="ECO:0000303"/>
    <property type="project" value="ComplexPortal"/>
</dbReference>
<dbReference type="CDD" id="cd01408">
    <property type="entry name" value="SIRT1"/>
    <property type="match status" value="1"/>
</dbReference>
<dbReference type="FunFam" id="3.30.1600.10:FF:000013">
    <property type="entry name" value="NAD-dependent protein deacetylase sirtuin-1"/>
    <property type="match status" value="1"/>
</dbReference>
<dbReference type="Gene3D" id="3.30.1600.10">
    <property type="entry name" value="SIR2/SIRT2 'Small Domain"/>
    <property type="match status" value="1"/>
</dbReference>
<dbReference type="Gene3D" id="3.40.50.1220">
    <property type="entry name" value="TPP-binding domain"/>
    <property type="match status" value="1"/>
</dbReference>
<dbReference type="InterPro" id="IPR029035">
    <property type="entry name" value="DHS-like_NAD/FAD-binding_dom"/>
</dbReference>
<dbReference type="InterPro" id="IPR050134">
    <property type="entry name" value="NAD-dep_sirtuin_deacylases"/>
</dbReference>
<dbReference type="InterPro" id="IPR003000">
    <property type="entry name" value="Sirtuin"/>
</dbReference>
<dbReference type="InterPro" id="IPR026591">
    <property type="entry name" value="Sirtuin_cat_small_dom_sf"/>
</dbReference>
<dbReference type="InterPro" id="IPR026590">
    <property type="entry name" value="Ssirtuin_cat_dom"/>
</dbReference>
<dbReference type="PANTHER" id="PTHR11085:SF9">
    <property type="entry name" value="NAD-DEPENDENT PROTEIN DEACETYLASE SIRTUIN-1"/>
    <property type="match status" value="1"/>
</dbReference>
<dbReference type="PANTHER" id="PTHR11085">
    <property type="entry name" value="NAD-DEPENDENT PROTEIN DEACYLASE SIRTUIN-5, MITOCHONDRIAL-RELATED"/>
    <property type="match status" value="1"/>
</dbReference>
<dbReference type="Pfam" id="PF02146">
    <property type="entry name" value="SIR2"/>
    <property type="match status" value="1"/>
</dbReference>
<dbReference type="SUPFAM" id="SSF52467">
    <property type="entry name" value="DHS-like NAD/FAD-binding domain"/>
    <property type="match status" value="1"/>
</dbReference>
<dbReference type="PROSITE" id="PS50305">
    <property type="entry name" value="SIRTUIN"/>
    <property type="match status" value="1"/>
</dbReference>
<feature type="chain" id="PRO_0000249599" description="NAD-dependent protein deacetylase sir-2.1">
    <location>
        <begin position="1"/>
        <end position="607"/>
    </location>
</feature>
<feature type="domain" description="Deacetylase sirtuin-type" evidence="3">
    <location>
        <begin position="128"/>
        <end position="401"/>
    </location>
</feature>
<feature type="region of interest" description="Disordered" evidence="4">
    <location>
        <begin position="1"/>
        <end position="68"/>
    </location>
</feature>
<feature type="region of interest" description="Disordered" evidence="4">
    <location>
        <begin position="426"/>
        <end position="453"/>
    </location>
</feature>
<feature type="compositionally biased region" description="Low complexity" evidence="4">
    <location>
        <begin position="55"/>
        <end position="64"/>
    </location>
</feature>
<feature type="active site" description="Proton acceptor" evidence="3">
    <location>
        <position position="255"/>
    </location>
</feature>
<feature type="binding site" evidence="1">
    <location>
        <begin position="153"/>
        <end position="172"/>
    </location>
    <ligand>
        <name>NAD(+)</name>
        <dbReference type="ChEBI" id="CHEBI:57540"/>
    </ligand>
</feature>
<feature type="binding site" evidence="2">
    <location>
        <begin position="237"/>
        <end position="240"/>
    </location>
    <ligand>
        <name>NAD(+)</name>
        <dbReference type="ChEBI" id="CHEBI:57540"/>
    </ligand>
</feature>
<feature type="binding site" evidence="3">
    <location>
        <position position="263"/>
    </location>
    <ligand>
        <name>Zn(2+)</name>
        <dbReference type="ChEBI" id="CHEBI:29105"/>
    </ligand>
</feature>
<feature type="binding site" evidence="3">
    <location>
        <position position="266"/>
    </location>
    <ligand>
        <name>Zn(2+)</name>
        <dbReference type="ChEBI" id="CHEBI:29105"/>
    </ligand>
</feature>
<feature type="binding site" evidence="3">
    <location>
        <position position="287"/>
    </location>
    <ligand>
        <name>Zn(2+)</name>
        <dbReference type="ChEBI" id="CHEBI:29105"/>
    </ligand>
</feature>
<feature type="binding site" evidence="3">
    <location>
        <position position="290"/>
    </location>
    <ligand>
        <name>Zn(2+)</name>
        <dbReference type="ChEBI" id="CHEBI:29105"/>
    </ligand>
</feature>
<feature type="binding site" evidence="1">
    <location>
        <begin position="327"/>
        <end position="329"/>
    </location>
    <ligand>
        <name>NAD(+)</name>
        <dbReference type="ChEBI" id="CHEBI:57540"/>
    </ligand>
</feature>
<feature type="binding site" evidence="1">
    <location>
        <begin position="352"/>
        <end position="354"/>
    </location>
    <ligand>
        <name>NAD(+)</name>
        <dbReference type="ChEBI" id="CHEBI:57540"/>
    </ligand>
</feature>
<feature type="binding site" evidence="1">
    <location>
        <position position="369"/>
    </location>
    <ligand>
        <name>NAD(+)</name>
        <dbReference type="ChEBI" id="CHEBI:57540"/>
    </ligand>
</feature>
<sequence length="607" mass="68766">MSRDSGNDSEVAVTHGEVQEITEENPEIGSMHITQETDISDAPETNTDSSRQRTESTTSVSSESWQNNDEMMSNLRRAQRLLDDGATPLQIIQQIFPDFNASRIATMSENAHFAILSDLLERAPVRQKLTNYNSLADAVELFKTKKHILVLTGAGVSVSCGIPDFRSKDGIYARLRSEFPDLPDPTAMFDIRYFRENPAPFYNFAREIFPGQFVPSVSHRFIKELETSGRLLRNYTQNIDTLEHQTGIKRVVECHGSFSKCTCTRCGQKYDGNEIREEVLAMRVAHCKRCEGVIKPNIVFFGEDLGREFHQHVTEDKHKVDLIVVIGSSLKVRPVALIPHCVDKNVPQILINRESLPHYNADIELLGNCDDIIRDICFSLGGSFTELITSYDSIMEQQGKTKSQKPSQNKRQLISQEDFLNICMKEKRNDDSSDEPTLKKPRMSVADDSMDSEKNNFQEIQKHKSEDDDDTRNSDDILKKIKHPRLLSITEMLHDNKCVAISAHQTVFPGAECSFDLETLKLVRDVHHETHCESSCGSSCSSNADSEANQLSRAQSLDDFVLSDEDRKNTIHLDLQRADSCDGDFQYELSETIDPETFSHLCEEMRI</sequence>